<evidence type="ECO:0000269" key="1">
    <source>
    </source>
</evidence>
<evidence type="ECO:0000269" key="2">
    <source>
    </source>
</evidence>
<evidence type="ECO:0000269" key="3">
    <source>
    </source>
</evidence>
<evidence type="ECO:0000269" key="4">
    <source>
    </source>
</evidence>
<evidence type="ECO:0000303" key="5">
    <source>
    </source>
</evidence>
<evidence type="ECO:0000305" key="6"/>
<evidence type="ECO:0007829" key="7">
    <source>
        <dbReference type="PDB" id="2LPX"/>
    </source>
</evidence>
<evidence type="ECO:0007829" key="8">
    <source>
        <dbReference type="PDB" id="4C9C"/>
    </source>
</evidence>
<accession>Q256S2</accession>
<gene>
    <name evidence="5" type="primary">FRAA1E.1</name>
    <name evidence="5" type="synonym">FRAA1E.2</name>
</gene>
<protein>
    <recommendedName>
        <fullName evidence="5">Major strawberry allergen Fra a 1-E</fullName>
    </recommendedName>
    <alternativeName>
        <fullName evidence="6">Class 10 plant pathogenesis-related protein Fra a 1.01</fullName>
        <shortName evidence="6">PR10-related protein Fra a 1.01</shortName>
    </alternativeName>
    <alternativeName>
        <fullName evidence="6">Fra a 1.01E</fullName>
    </alternativeName>
    <allergenName evidence="6">Fra a 1</allergenName>
</protein>
<comment type="function">
    <text evidence="1 2">Involved in the control of flavonoid biosynthesis in fruits, probably by binding directly to natural flavonoids (PubMed:19969523). Binds the natural flavonoid quercetin-3-O-glucuronide with affinities in the low micromolar range (PubMed:24133217).</text>
</comment>
<comment type="subunit">
    <text evidence="2 4">Monomer (PubMed:24133217). Interacts with AP (PubMed:28656626).</text>
</comment>
<comment type="tissue specificity">
    <text evidence="1">Highly expressed in roots (PubMed:19969523). Expressed in open flowers (PubMed:19969523). Expressed at low levels in leaves, flower buds and fruits (PubMed:19969523).</text>
</comment>
<comment type="allergen">
    <text evidence="3">May cause an allergic reaction in human (PubMed:27086707). Binds to IgE of patients allergic to birch Bet v 1 (PubMed:27086707). Causes degranulation of basophils sensitized with IgE of patients allergic to birch Bet v 1 (PubMed:27086707).</text>
</comment>
<comment type="miscellaneous">
    <text evidence="1">Fruits silencing FRAA3 exhibit loss of pigmentation in mature fruits due to the lack of anthocyanin biosynthesis.</text>
</comment>
<comment type="similarity">
    <text evidence="6">Belongs to the BetVI family.</text>
</comment>
<keyword id="KW-0002">3D-structure</keyword>
<keyword id="KW-0020">Allergen</keyword>
<keyword id="KW-0284">Flavonoid biosynthesis</keyword>
<keyword id="KW-0568">Pathogenesis-related protein</keyword>
<keyword id="KW-0611">Plant defense</keyword>
<name>FRA1E_FRAAN</name>
<sequence length="160" mass="17766">MGVYTYENEFTSDIPAPKLFKAFVLDADNLIPKIAPQAVKCAEILEGDGGPGTIKKITFGEGSHYGYVKHKIHSIDKVNHTYSYSLIEGDALSENIEKIDYETKLVSAPHGGTIIKTTSKYHTKGDVEIKEEHVKAGKEKAAHLFKLIEGYLKDHPSEYN</sequence>
<proteinExistence type="evidence at protein level"/>
<feature type="chain" id="PRO_0000447012" description="Major strawberry allergen Fra a 1-E">
    <location>
        <begin position="1"/>
        <end position="160"/>
    </location>
</feature>
<feature type="strand" evidence="8">
    <location>
        <begin position="2"/>
        <end position="14"/>
    </location>
</feature>
<feature type="helix" evidence="8">
    <location>
        <begin position="16"/>
        <end position="23"/>
    </location>
</feature>
<feature type="turn" evidence="8">
    <location>
        <begin position="24"/>
        <end position="26"/>
    </location>
</feature>
<feature type="helix" evidence="8">
    <location>
        <begin position="27"/>
        <end position="34"/>
    </location>
</feature>
<feature type="turn" evidence="8">
    <location>
        <begin position="36"/>
        <end position="38"/>
    </location>
</feature>
<feature type="strand" evidence="8">
    <location>
        <begin position="40"/>
        <end position="50"/>
    </location>
</feature>
<feature type="strand" evidence="8">
    <location>
        <begin position="54"/>
        <end position="59"/>
    </location>
</feature>
<feature type="strand" evidence="7">
    <location>
        <begin position="61"/>
        <end position="65"/>
    </location>
</feature>
<feature type="strand" evidence="8">
    <location>
        <begin position="66"/>
        <end position="76"/>
    </location>
</feature>
<feature type="turn" evidence="8">
    <location>
        <begin position="77"/>
        <end position="80"/>
    </location>
</feature>
<feature type="strand" evidence="8">
    <location>
        <begin position="81"/>
        <end position="89"/>
    </location>
</feature>
<feature type="strand" evidence="8">
    <location>
        <begin position="94"/>
        <end position="107"/>
    </location>
</feature>
<feature type="strand" evidence="8">
    <location>
        <begin position="113"/>
        <end position="126"/>
    </location>
</feature>
<feature type="helix" evidence="8">
    <location>
        <begin position="131"/>
        <end position="154"/>
    </location>
</feature>
<dbReference type="EMBL" id="AM236319">
    <property type="protein sequence ID" value="CAJ85645.1"/>
    <property type="molecule type" value="Genomic_DNA"/>
</dbReference>
<dbReference type="EMBL" id="AM236320">
    <property type="protein sequence ID" value="CAJ85646.1"/>
    <property type="molecule type" value="Genomic_DNA"/>
</dbReference>
<dbReference type="PDB" id="2LPX">
    <property type="method" value="NMR"/>
    <property type="chains" value="A=1-160"/>
</dbReference>
<dbReference type="PDB" id="4C9C">
    <property type="method" value="X-ray"/>
    <property type="resolution" value="2.20 A"/>
    <property type="chains" value="A/B=2-160"/>
</dbReference>
<dbReference type="PDB" id="4C9I">
    <property type="method" value="X-ray"/>
    <property type="resolution" value="3.10 A"/>
    <property type="chains" value="A/B/C/D/E/F=2-160"/>
</dbReference>
<dbReference type="PDBsum" id="2LPX"/>
<dbReference type="PDBsum" id="4C9C"/>
<dbReference type="PDBsum" id="4C9I"/>
<dbReference type="SMR" id="Q256S2"/>
<dbReference type="Allergome" id="2124">
    <property type="allergen name" value="Fra a 1"/>
</dbReference>
<dbReference type="EvolutionaryTrace" id="Q256S2"/>
<dbReference type="GO" id="GO:0005737">
    <property type="term" value="C:cytoplasm"/>
    <property type="evidence" value="ECO:0007669"/>
    <property type="project" value="TreeGrafter"/>
</dbReference>
<dbReference type="GO" id="GO:0005634">
    <property type="term" value="C:nucleus"/>
    <property type="evidence" value="ECO:0007669"/>
    <property type="project" value="TreeGrafter"/>
</dbReference>
<dbReference type="GO" id="GO:0010427">
    <property type="term" value="F:abscisic acid binding"/>
    <property type="evidence" value="ECO:0007669"/>
    <property type="project" value="InterPro"/>
</dbReference>
<dbReference type="GO" id="GO:0097243">
    <property type="term" value="F:flavonoid binding"/>
    <property type="evidence" value="ECO:0000315"/>
    <property type="project" value="UniProtKB"/>
</dbReference>
<dbReference type="GO" id="GO:0004864">
    <property type="term" value="F:protein phosphatase inhibitor activity"/>
    <property type="evidence" value="ECO:0007669"/>
    <property type="project" value="InterPro"/>
</dbReference>
<dbReference type="GO" id="GO:0038023">
    <property type="term" value="F:signaling receptor activity"/>
    <property type="evidence" value="ECO:0007669"/>
    <property type="project" value="InterPro"/>
</dbReference>
<dbReference type="GO" id="GO:0009738">
    <property type="term" value="P:abscisic acid-activated signaling pathway"/>
    <property type="evidence" value="ECO:0007669"/>
    <property type="project" value="InterPro"/>
</dbReference>
<dbReference type="GO" id="GO:0006952">
    <property type="term" value="P:defense response"/>
    <property type="evidence" value="ECO:0007669"/>
    <property type="project" value="UniProtKB-KW"/>
</dbReference>
<dbReference type="GO" id="GO:0009813">
    <property type="term" value="P:flavonoid biosynthetic process"/>
    <property type="evidence" value="ECO:0000315"/>
    <property type="project" value="UniProtKB"/>
</dbReference>
<dbReference type="CDD" id="cd07816">
    <property type="entry name" value="Bet_v1-like"/>
    <property type="match status" value="1"/>
</dbReference>
<dbReference type="FunFam" id="3.30.530.20:FF:000007">
    <property type="entry name" value="Major pollen allergen Bet v 1-A"/>
    <property type="match status" value="1"/>
</dbReference>
<dbReference type="Gene3D" id="3.30.530.20">
    <property type="match status" value="1"/>
</dbReference>
<dbReference type="InterPro" id="IPR000916">
    <property type="entry name" value="Bet_v_I/MLP"/>
</dbReference>
<dbReference type="InterPro" id="IPR024949">
    <property type="entry name" value="Bet_v_I_allergen"/>
</dbReference>
<dbReference type="InterPro" id="IPR050279">
    <property type="entry name" value="Plant_def-hormone_signal"/>
</dbReference>
<dbReference type="InterPro" id="IPR023393">
    <property type="entry name" value="START-like_dom_sf"/>
</dbReference>
<dbReference type="PANTHER" id="PTHR31213">
    <property type="entry name" value="OS08G0374000 PROTEIN-RELATED"/>
    <property type="match status" value="1"/>
</dbReference>
<dbReference type="PANTHER" id="PTHR31213:SF55">
    <property type="entry name" value="STRESS-INDUCED PROTEIN SAM22"/>
    <property type="match status" value="1"/>
</dbReference>
<dbReference type="Pfam" id="PF00407">
    <property type="entry name" value="Bet_v_1"/>
    <property type="match status" value="1"/>
</dbReference>
<dbReference type="PRINTS" id="PR00634">
    <property type="entry name" value="BETALLERGEN"/>
</dbReference>
<dbReference type="SUPFAM" id="SSF55961">
    <property type="entry name" value="Bet v1-like"/>
    <property type="match status" value="1"/>
</dbReference>
<reference key="1">
    <citation type="journal article" date="2007" name="Mol. Immunol.">
        <title>Cloning and sequencing of the Bet v 1-homologous allergen Fra a 1 in strawberry (Fragaria ananassa) shows the presence of an intron and little variability in amino acid sequence.</title>
        <authorList>
            <person name="Musidlowska-Persson A."/>
            <person name="Alm R."/>
            <person name="Emanuelsson C."/>
        </authorList>
    </citation>
    <scope>NUCLEOTIDE SEQUENCE [GENOMIC DNA]</scope>
    <source>
        <tissue>Leaf</tissue>
    </source>
</reference>
<reference key="2">
    <citation type="journal article" date="2010" name="Mol. Plant">
        <title>The strawberry fruit Fra a allergen functions in flavonoid biosynthesis.</title>
        <authorList>
            <person name="Munoz C."/>
            <person name="Hoffmann T."/>
            <person name="Escobar N.M."/>
            <person name="Ludemann F."/>
            <person name="Botella M.A."/>
            <person name="Valpuesta V."/>
            <person name="Schwab W."/>
        </authorList>
    </citation>
    <scope>FUNCTION</scope>
    <scope>TISSUE SPECIFICITY</scope>
</reference>
<reference key="3">
    <citation type="journal article" date="2016" name="J. Agric. Food Chem.">
        <title>Fra a 1.02 is the most potent isoform of the Bet v 1-like allergen in strawberry fruit.</title>
        <authorList>
            <person name="Franz-Oberdorf K."/>
            <person name="Eberlein B."/>
            <person name="Edelmann K."/>
            <person name="Huecherig S."/>
            <person name="Besbes F."/>
            <person name="Darsow U."/>
            <person name="Ring J."/>
            <person name="Schwab W."/>
        </authorList>
    </citation>
    <scope>ALLERGEN</scope>
</reference>
<reference key="4">
    <citation type="journal article" date="2017" name="Proteins">
        <title>Physical interaction between the strawberry allergen Fra a 1 and an associated partner FaAP: Interaction of Fra a 1 proteins and FaAP.</title>
        <authorList>
            <person name="Franz-Oberdorf K."/>
            <person name="Langer A."/>
            <person name="Strasser R."/>
            <person name="Isono E."/>
            <person name="Ranftl Q.L."/>
            <person name="Wunschel C."/>
            <person name="Schwab W."/>
        </authorList>
    </citation>
    <scope>INTERACTION WITH AP</scope>
</reference>
<reference key="5">
    <citation type="journal article" date="2012" name="Biosci. Rep.">
        <title>Solution structure of the strawberry allergen Fra a 1.</title>
        <authorList>
            <person name="Seutter von Loetzen C."/>
            <person name="Schweimer K."/>
            <person name="Schwab W."/>
            <person name="Rosch P."/>
            <person name="Hartl-Spiegelhauer O."/>
        </authorList>
    </citation>
    <scope>STRUCTURE BY NMR</scope>
</reference>
<reference key="6">
    <citation type="journal article" date="2013" name="J. Biol. Chem.">
        <title>The strawberry pathogenesis-related 10 (PR-10) Fra a proteins control flavonoid biosynthesis by binding to metabolic intermediates.</title>
        <authorList>
            <person name="Casanal A."/>
            <person name="Zander U."/>
            <person name="Munoz C."/>
            <person name="Dupeux F."/>
            <person name="Luque I."/>
            <person name="Botella M.A."/>
            <person name="Schwab W."/>
            <person name="Valpuesta V."/>
            <person name="Marquez J.A."/>
        </authorList>
    </citation>
    <scope>X-RAY CRYSTALLOGRAPHY (2.20 ANGSTROMS) OF 2-160</scope>
    <scope>SUBUNIT</scope>
</reference>
<organism>
    <name type="scientific">Fragaria ananassa</name>
    <name type="common">Strawberry</name>
    <name type="synonym">Fragaria chiloensis x Fragaria virginiana</name>
    <dbReference type="NCBI Taxonomy" id="3747"/>
    <lineage>
        <taxon>Eukaryota</taxon>
        <taxon>Viridiplantae</taxon>
        <taxon>Streptophyta</taxon>
        <taxon>Embryophyta</taxon>
        <taxon>Tracheophyta</taxon>
        <taxon>Spermatophyta</taxon>
        <taxon>Magnoliopsida</taxon>
        <taxon>eudicotyledons</taxon>
        <taxon>Gunneridae</taxon>
        <taxon>Pentapetalae</taxon>
        <taxon>rosids</taxon>
        <taxon>fabids</taxon>
        <taxon>Rosales</taxon>
        <taxon>Rosaceae</taxon>
        <taxon>Rosoideae</taxon>
        <taxon>Potentilleae</taxon>
        <taxon>Fragariinae</taxon>
        <taxon>Fragaria</taxon>
    </lineage>
</organism>